<gene>
    <name type="ORF">DDB_G0287991</name>
</gene>
<feature type="chain" id="PRO_0000347002" description="Putative uncharacterized protein DDB_G0287991">
    <location>
        <begin position="1"/>
        <end position="276"/>
    </location>
</feature>
<feature type="region of interest" description="Disordered" evidence="1">
    <location>
        <begin position="1"/>
        <end position="20"/>
    </location>
</feature>
<organism>
    <name type="scientific">Dictyostelium discoideum</name>
    <name type="common">Social amoeba</name>
    <dbReference type="NCBI Taxonomy" id="44689"/>
    <lineage>
        <taxon>Eukaryota</taxon>
        <taxon>Amoebozoa</taxon>
        <taxon>Evosea</taxon>
        <taxon>Eumycetozoa</taxon>
        <taxon>Dictyostelia</taxon>
        <taxon>Dictyosteliales</taxon>
        <taxon>Dictyosteliaceae</taxon>
        <taxon>Dictyostelium</taxon>
    </lineage>
</organism>
<accession>Q54JK5</accession>
<sequence>MMSDEQHQGGDGQTTTNTNTVAYRAQPVVPMDIFTFQNLRMQPGYAPNSTKQINLYYWWGDHETTCPDYTQVTTAWVVGWVKSSKIRAMKMPEGSTDEPTYSLDLDIRDGTGQLKIIQLKTTLGANGRQSNYDENGGVLQRNSPFKENQYYSFVLKPALQRQAPQQQEQLTTIQGYLVSYHEIVNHNEITTHLSDFVKAYHRMQSNFRYFIHKVIRAYSVNDIAVSLDVIQSHLKDIMSEEQNTSQQLVDYLQYLVSEKQILTQTDSGYMFIKEQQ</sequence>
<keyword id="KW-1185">Reference proteome</keyword>
<proteinExistence type="predicted"/>
<reference key="1">
    <citation type="journal article" date="2005" name="Nature">
        <title>The genome of the social amoeba Dictyostelium discoideum.</title>
        <authorList>
            <person name="Eichinger L."/>
            <person name="Pachebat J.A."/>
            <person name="Gloeckner G."/>
            <person name="Rajandream M.A."/>
            <person name="Sucgang R."/>
            <person name="Berriman M."/>
            <person name="Song J."/>
            <person name="Olsen R."/>
            <person name="Szafranski K."/>
            <person name="Xu Q."/>
            <person name="Tunggal B."/>
            <person name="Kummerfeld S."/>
            <person name="Madera M."/>
            <person name="Konfortov B.A."/>
            <person name="Rivero F."/>
            <person name="Bankier A.T."/>
            <person name="Lehmann R."/>
            <person name="Hamlin N."/>
            <person name="Davies R."/>
            <person name="Gaudet P."/>
            <person name="Fey P."/>
            <person name="Pilcher K."/>
            <person name="Chen G."/>
            <person name="Saunders D."/>
            <person name="Sodergren E.J."/>
            <person name="Davis P."/>
            <person name="Kerhornou A."/>
            <person name="Nie X."/>
            <person name="Hall N."/>
            <person name="Anjard C."/>
            <person name="Hemphill L."/>
            <person name="Bason N."/>
            <person name="Farbrother P."/>
            <person name="Desany B."/>
            <person name="Just E."/>
            <person name="Morio T."/>
            <person name="Rost R."/>
            <person name="Churcher C.M."/>
            <person name="Cooper J."/>
            <person name="Haydock S."/>
            <person name="van Driessche N."/>
            <person name="Cronin A."/>
            <person name="Goodhead I."/>
            <person name="Muzny D.M."/>
            <person name="Mourier T."/>
            <person name="Pain A."/>
            <person name="Lu M."/>
            <person name="Harper D."/>
            <person name="Lindsay R."/>
            <person name="Hauser H."/>
            <person name="James K.D."/>
            <person name="Quiles M."/>
            <person name="Madan Babu M."/>
            <person name="Saito T."/>
            <person name="Buchrieser C."/>
            <person name="Wardroper A."/>
            <person name="Felder M."/>
            <person name="Thangavelu M."/>
            <person name="Johnson D."/>
            <person name="Knights A."/>
            <person name="Loulseged H."/>
            <person name="Mungall K.L."/>
            <person name="Oliver K."/>
            <person name="Price C."/>
            <person name="Quail M.A."/>
            <person name="Urushihara H."/>
            <person name="Hernandez J."/>
            <person name="Rabbinowitsch E."/>
            <person name="Steffen D."/>
            <person name="Sanders M."/>
            <person name="Ma J."/>
            <person name="Kohara Y."/>
            <person name="Sharp S."/>
            <person name="Simmonds M.N."/>
            <person name="Spiegler S."/>
            <person name="Tivey A."/>
            <person name="Sugano S."/>
            <person name="White B."/>
            <person name="Walker D."/>
            <person name="Woodward J.R."/>
            <person name="Winckler T."/>
            <person name="Tanaka Y."/>
            <person name="Shaulsky G."/>
            <person name="Schleicher M."/>
            <person name="Weinstock G.M."/>
            <person name="Rosenthal A."/>
            <person name="Cox E.C."/>
            <person name="Chisholm R.L."/>
            <person name="Gibbs R.A."/>
            <person name="Loomis W.F."/>
            <person name="Platzer M."/>
            <person name="Kay R.R."/>
            <person name="Williams J.G."/>
            <person name="Dear P.H."/>
            <person name="Noegel A.A."/>
            <person name="Barrell B.G."/>
            <person name="Kuspa A."/>
        </authorList>
    </citation>
    <scope>NUCLEOTIDE SEQUENCE [LARGE SCALE GENOMIC DNA]</scope>
    <source>
        <strain>AX4</strain>
    </source>
</reference>
<protein>
    <recommendedName>
        <fullName>Putative uncharacterized protein DDB_G0287991</fullName>
    </recommendedName>
</protein>
<evidence type="ECO:0000256" key="1">
    <source>
        <dbReference type="SAM" id="MobiDB-lite"/>
    </source>
</evidence>
<dbReference type="EMBL" id="AAFI02000107">
    <property type="protein sequence ID" value="EAL63421.1"/>
    <property type="molecule type" value="Genomic_DNA"/>
</dbReference>
<dbReference type="RefSeq" id="XP_636926.1">
    <property type="nucleotide sequence ID" value="XM_631834.1"/>
</dbReference>
<dbReference type="SMR" id="Q54JK5"/>
<dbReference type="FunCoup" id="Q54JK5">
    <property type="interactions" value="435"/>
</dbReference>
<dbReference type="PaxDb" id="44689-DDB0187724"/>
<dbReference type="EnsemblProtists" id="EAL63421">
    <property type="protein sequence ID" value="EAL63421"/>
    <property type="gene ID" value="DDB_G0287991"/>
</dbReference>
<dbReference type="GeneID" id="8626401"/>
<dbReference type="KEGG" id="ddi:DDB_G0287991"/>
<dbReference type="dictyBase" id="DDB_G0287991"/>
<dbReference type="VEuPathDB" id="AmoebaDB:DDB_G0287991"/>
<dbReference type="eggNOG" id="ENOG502RI71">
    <property type="taxonomic scope" value="Eukaryota"/>
</dbReference>
<dbReference type="HOGENOM" id="CLU_1009827_0_0_1"/>
<dbReference type="InParanoid" id="Q54JK5"/>
<dbReference type="OMA" id="HNEITTH"/>
<dbReference type="PRO" id="PR:Q54JK5"/>
<dbReference type="Proteomes" id="UP000002195">
    <property type="component" value="Chromosome 5"/>
</dbReference>
<dbReference type="Gene3D" id="2.40.50.140">
    <property type="entry name" value="Nucleic acid-binding proteins"/>
    <property type="match status" value="1"/>
</dbReference>
<dbReference type="InterPro" id="IPR012340">
    <property type="entry name" value="NA-bd_OB-fold"/>
</dbReference>
<name>Y7724_DICDI</name>